<sequence>MHRLMGVNSTAAAAAGQPNVSCTCNCKRSLFQSMEITELEFVQIIIIVVVMMVMVVVITCLLSHYKLSARSFISRHSQGRRREDALSSEGCLWPSESTVSGNGIPEPQVYAPPRPTDRLAVPPFAQRERFHRFQPTYPYLQHEIDLPPTISLSDGEEPPPYQGPCTLQLRDPEQQLELNRESVRAPPNRTIFDSDLMDSARLGGPCPPSSNSGISATCYGSGGRMEGPPPTYSEVIGHYPGSSFQHQQSSGPPSLLEGTRLHHTHIAPLESAAIWSKEKDKQKGHPL</sequence>
<organism>
    <name type="scientific">Homo sapiens</name>
    <name type="common">Human</name>
    <dbReference type="NCBI Taxonomy" id="9606"/>
    <lineage>
        <taxon>Eukaryota</taxon>
        <taxon>Metazoa</taxon>
        <taxon>Chordata</taxon>
        <taxon>Craniata</taxon>
        <taxon>Vertebrata</taxon>
        <taxon>Euteleostomi</taxon>
        <taxon>Mammalia</taxon>
        <taxon>Eutheria</taxon>
        <taxon>Euarchontoglires</taxon>
        <taxon>Primates</taxon>
        <taxon>Haplorrhini</taxon>
        <taxon>Catarrhini</taxon>
        <taxon>Hominidae</taxon>
        <taxon>Homo</taxon>
    </lineage>
</organism>
<evidence type="ECO:0000255" key="1"/>
<evidence type="ECO:0000256" key="2">
    <source>
        <dbReference type="SAM" id="MobiDB-lite"/>
    </source>
</evidence>
<evidence type="ECO:0000269" key="3">
    <source>
    </source>
</evidence>
<evidence type="ECO:0000269" key="4">
    <source>
    </source>
</evidence>
<evidence type="ECO:0000269" key="5">
    <source>
    </source>
</evidence>
<evidence type="ECO:0000269" key="6">
    <source>
    </source>
</evidence>
<evidence type="ECO:0000303" key="7">
    <source>
    </source>
</evidence>
<evidence type="ECO:0000303" key="8">
    <source>
    </source>
</evidence>
<evidence type="ECO:0000305" key="9"/>
<dbReference type="EMBL" id="AF224278">
    <property type="protein sequence ID" value="AAF86322.1"/>
    <property type="molecule type" value="mRNA"/>
</dbReference>
<dbReference type="EMBL" id="AF305616">
    <property type="protein sequence ID" value="AAL16781.1"/>
    <property type="molecule type" value="mRNA"/>
</dbReference>
<dbReference type="EMBL" id="AY128643">
    <property type="protein sequence ID" value="AAM89277.1"/>
    <property type="molecule type" value="mRNA"/>
</dbReference>
<dbReference type="EMBL" id="AF305426">
    <property type="protein sequence ID" value="AAL09357.1"/>
    <property type="molecule type" value="Genomic_DNA"/>
</dbReference>
<dbReference type="EMBL" id="AL035541">
    <property type="status" value="NOT_ANNOTATED_CDS"/>
    <property type="molecule type" value="Genomic_DNA"/>
</dbReference>
<dbReference type="EMBL" id="AL121913">
    <property type="status" value="NOT_ANNOTATED_CDS"/>
    <property type="molecule type" value="Genomic_DNA"/>
</dbReference>
<dbReference type="EMBL" id="CH471077">
    <property type="protein sequence ID" value="EAW75505.1"/>
    <property type="molecule type" value="Genomic_DNA"/>
</dbReference>
<dbReference type="EMBL" id="CH471077">
    <property type="protein sequence ID" value="EAW75508.1"/>
    <property type="molecule type" value="Genomic_DNA"/>
</dbReference>
<dbReference type="EMBL" id="BC015918">
    <property type="protein sequence ID" value="AAH15918.2"/>
    <property type="molecule type" value="mRNA"/>
</dbReference>
<dbReference type="CCDS" id="CCDS13462.1">
    <molecule id="Q969W9-2"/>
</dbReference>
<dbReference type="CCDS" id="CCDS13463.1">
    <molecule id="Q969W9-1"/>
</dbReference>
<dbReference type="CCDS" id="CCDS13464.1">
    <molecule id="Q969W9-3"/>
</dbReference>
<dbReference type="RefSeq" id="NP_001242905.1">
    <property type="nucleotide sequence ID" value="NM_001255976.1"/>
</dbReference>
<dbReference type="RefSeq" id="NP_064567.2">
    <molecule id="Q969W9-1"/>
    <property type="nucleotide sequence ID" value="NM_020182.4"/>
</dbReference>
<dbReference type="RefSeq" id="NP_954638.1">
    <molecule id="Q969W9-2"/>
    <property type="nucleotide sequence ID" value="NM_199169.3"/>
</dbReference>
<dbReference type="RefSeq" id="NP_954639.1">
    <molecule id="Q969W9-3"/>
    <property type="nucleotide sequence ID" value="NM_199170.3"/>
</dbReference>
<dbReference type="RefSeq" id="NP_954640.1">
    <molecule id="Q969W9-3"/>
    <property type="nucleotide sequence ID" value="NM_199171.3"/>
</dbReference>
<dbReference type="SMR" id="Q969W9"/>
<dbReference type="BioGRID" id="121262">
    <property type="interactions" value="59"/>
</dbReference>
<dbReference type="FunCoup" id="Q969W9">
    <property type="interactions" value="416"/>
</dbReference>
<dbReference type="IntAct" id="Q969W9">
    <property type="interactions" value="37"/>
</dbReference>
<dbReference type="MINT" id="Q969W9"/>
<dbReference type="STRING" id="9606.ENSP00000345826"/>
<dbReference type="GlyGen" id="Q969W9">
    <property type="glycosylation" value="1 site, 1 O-linked glycan (1 site)"/>
</dbReference>
<dbReference type="iPTMnet" id="Q969W9"/>
<dbReference type="PhosphoSitePlus" id="Q969W9"/>
<dbReference type="BioMuta" id="PMEPA1"/>
<dbReference type="DMDM" id="20140695"/>
<dbReference type="jPOST" id="Q969W9"/>
<dbReference type="MassIVE" id="Q969W9"/>
<dbReference type="PaxDb" id="9606-ENSP00000345826"/>
<dbReference type="PeptideAtlas" id="Q969W9"/>
<dbReference type="ProteomicsDB" id="73203"/>
<dbReference type="Antibodypedia" id="29054">
    <property type="antibodies" value="178 antibodies from 32 providers"/>
</dbReference>
<dbReference type="DNASU" id="56937"/>
<dbReference type="Ensembl" id="ENST00000265626.8">
    <molecule id="Q969W9-3"/>
    <property type="protein sequence ID" value="ENSP00000265626.4"/>
    <property type="gene ID" value="ENSG00000124225.16"/>
</dbReference>
<dbReference type="Ensembl" id="ENST00000341744.8">
    <molecule id="Q969W9-1"/>
    <property type="protein sequence ID" value="ENSP00000345826.3"/>
    <property type="gene ID" value="ENSG00000124225.16"/>
</dbReference>
<dbReference type="Ensembl" id="ENST00000347215.8">
    <molecule id="Q969W9-2"/>
    <property type="protein sequence ID" value="ENSP00000344014.4"/>
    <property type="gene ID" value="ENSG00000124225.16"/>
</dbReference>
<dbReference type="Ensembl" id="ENST00000395814.5">
    <molecule id="Q969W9-3"/>
    <property type="protein sequence ID" value="ENSP00000379159.1"/>
    <property type="gene ID" value="ENSG00000124225.16"/>
</dbReference>
<dbReference type="Ensembl" id="ENST00000395816.7">
    <molecule id="Q969W9-3"/>
    <property type="protein sequence ID" value="ENSP00000379161.3"/>
    <property type="gene ID" value="ENSG00000124225.16"/>
</dbReference>
<dbReference type="GeneID" id="56937"/>
<dbReference type="KEGG" id="hsa:56937"/>
<dbReference type="MANE-Select" id="ENST00000341744.8">
    <property type="protein sequence ID" value="ENSP00000345826.3"/>
    <property type="RefSeq nucleotide sequence ID" value="NM_020182.5"/>
    <property type="RefSeq protein sequence ID" value="NP_064567.2"/>
</dbReference>
<dbReference type="UCSC" id="uc002xyq.5">
    <molecule id="Q969W9-1"/>
    <property type="organism name" value="human"/>
</dbReference>
<dbReference type="AGR" id="HGNC:14107"/>
<dbReference type="CTD" id="56937"/>
<dbReference type="DisGeNET" id="56937"/>
<dbReference type="GeneCards" id="PMEPA1"/>
<dbReference type="HGNC" id="HGNC:14107">
    <property type="gene designation" value="PMEPA1"/>
</dbReference>
<dbReference type="HPA" id="ENSG00000124225">
    <property type="expression patterns" value="Tissue enhanced (prostate)"/>
</dbReference>
<dbReference type="MIM" id="606564">
    <property type="type" value="gene"/>
</dbReference>
<dbReference type="neXtProt" id="NX_Q969W9"/>
<dbReference type="OpenTargets" id="ENSG00000124225"/>
<dbReference type="PharmGKB" id="PA162399822"/>
<dbReference type="VEuPathDB" id="HostDB:ENSG00000124225"/>
<dbReference type="eggNOG" id="ENOG502QRYK">
    <property type="taxonomic scope" value="Eukaryota"/>
</dbReference>
<dbReference type="GeneTree" id="ENSGT00390000000724"/>
<dbReference type="InParanoid" id="Q969W9"/>
<dbReference type="OMA" id="GISAMCY"/>
<dbReference type="OrthoDB" id="10038550at2759"/>
<dbReference type="PAN-GO" id="Q969W9">
    <property type="GO annotations" value="6 GO annotations based on evolutionary models"/>
</dbReference>
<dbReference type="PhylomeDB" id="Q969W9"/>
<dbReference type="TreeFam" id="TF331681"/>
<dbReference type="PathwayCommons" id="Q969W9"/>
<dbReference type="Reactome" id="R-HSA-2173788">
    <property type="pathway name" value="Downregulation of TGF-beta receptor signaling"/>
</dbReference>
<dbReference type="SignaLink" id="Q969W9"/>
<dbReference type="SIGNOR" id="Q969W9"/>
<dbReference type="BioGRID-ORCS" id="56937">
    <property type="hits" value="11 hits in 1154 CRISPR screens"/>
</dbReference>
<dbReference type="ChiTaRS" id="PMEPA1">
    <property type="organism name" value="human"/>
</dbReference>
<dbReference type="GeneWiki" id="TMEPAI"/>
<dbReference type="GenomeRNAi" id="56937"/>
<dbReference type="Pharos" id="Q969W9">
    <property type="development level" value="Tbio"/>
</dbReference>
<dbReference type="PRO" id="PR:Q969W9"/>
<dbReference type="Proteomes" id="UP000005640">
    <property type="component" value="Chromosome 20"/>
</dbReference>
<dbReference type="RNAct" id="Q969W9">
    <property type="molecule type" value="protein"/>
</dbReference>
<dbReference type="Bgee" id="ENSG00000124225">
    <property type="expression patterns" value="Expressed in visceral pleura and 193 other cell types or tissues"/>
</dbReference>
<dbReference type="ExpressionAtlas" id="Q969W9">
    <property type="expression patterns" value="baseline and differential"/>
</dbReference>
<dbReference type="GO" id="GO:0031901">
    <property type="term" value="C:early endosome membrane"/>
    <property type="evidence" value="ECO:0000314"/>
    <property type="project" value="UniProtKB"/>
</dbReference>
<dbReference type="GO" id="GO:0010008">
    <property type="term" value="C:endosome membrane"/>
    <property type="evidence" value="ECO:0000314"/>
    <property type="project" value="UniProtKB"/>
</dbReference>
<dbReference type="GO" id="GO:0000139">
    <property type="term" value="C:Golgi membrane"/>
    <property type="evidence" value="ECO:0000314"/>
    <property type="project" value="UniProtKB"/>
</dbReference>
<dbReference type="GO" id="GO:0043231">
    <property type="term" value="C:intracellular membrane-bounded organelle"/>
    <property type="evidence" value="ECO:0000314"/>
    <property type="project" value="HPA"/>
</dbReference>
<dbReference type="GO" id="GO:0016020">
    <property type="term" value="C:membrane"/>
    <property type="evidence" value="ECO:0000303"/>
    <property type="project" value="UniProtKB"/>
</dbReference>
<dbReference type="GO" id="GO:0005886">
    <property type="term" value="C:plasma membrane"/>
    <property type="evidence" value="ECO:0000304"/>
    <property type="project" value="Reactome"/>
</dbReference>
<dbReference type="GO" id="GO:0140311">
    <property type="term" value="F:protein sequestering activity"/>
    <property type="evidence" value="ECO:0000314"/>
    <property type="project" value="GO_Central"/>
</dbReference>
<dbReference type="GO" id="GO:0070412">
    <property type="term" value="F:R-SMAD binding"/>
    <property type="evidence" value="ECO:0000353"/>
    <property type="project" value="UniProtKB"/>
</dbReference>
<dbReference type="GO" id="GO:0050699">
    <property type="term" value="F:WW domain binding"/>
    <property type="evidence" value="ECO:0000353"/>
    <property type="project" value="UniProtKB"/>
</dbReference>
<dbReference type="GO" id="GO:0030521">
    <property type="term" value="P:androgen receptor signaling pathway"/>
    <property type="evidence" value="ECO:0000303"/>
    <property type="project" value="UniProtKB"/>
</dbReference>
<dbReference type="GO" id="GO:0060392">
    <property type="term" value="P:negative regulation of SMAD protein signal transduction"/>
    <property type="evidence" value="ECO:0000314"/>
    <property type="project" value="UniProtKB"/>
</dbReference>
<dbReference type="GO" id="GO:0030512">
    <property type="term" value="P:negative regulation of transforming growth factor beta receptor signaling pathway"/>
    <property type="evidence" value="ECO:0000314"/>
    <property type="project" value="UniProtKB"/>
</dbReference>
<dbReference type="InterPro" id="IPR043445">
    <property type="entry name" value="TMEPAI/LRAD4"/>
</dbReference>
<dbReference type="PANTHER" id="PTHR16514">
    <property type="entry name" value="LOW DENSITY LIPOPROTEIN RECEPTOR CLASS A DOMAIN-CONTAINING 4A"/>
    <property type="match status" value="1"/>
</dbReference>
<dbReference type="PANTHER" id="PTHR16514:SF5">
    <property type="entry name" value="PROTEIN TMEPAI"/>
    <property type="match status" value="1"/>
</dbReference>
<feature type="chain" id="PRO_0000185442" description="Protein TMEPAI">
    <location>
        <begin position="1"/>
        <end position="287"/>
    </location>
</feature>
<feature type="topological domain" description="Lumenal" evidence="1">
    <location>
        <begin position="1"/>
        <end position="40"/>
    </location>
</feature>
<feature type="transmembrane region" description="Helical" evidence="1">
    <location>
        <begin position="41"/>
        <end position="63"/>
    </location>
</feature>
<feature type="topological domain" description="Cytoplasmic" evidence="1">
    <location>
        <begin position="64"/>
        <end position="287"/>
    </location>
</feature>
<feature type="region of interest" description="Disordered" evidence="2">
    <location>
        <begin position="239"/>
        <end position="258"/>
    </location>
</feature>
<feature type="short sequence motif" description="PPxY motif 1">
    <location>
        <begin position="158"/>
        <end position="161"/>
    </location>
</feature>
<feature type="short sequence motif" description="SMAD interaction motif (SIM)">
    <location>
        <begin position="186"/>
        <end position="189"/>
    </location>
</feature>
<feature type="short sequence motif" description="PPxY motif 2">
    <location>
        <begin position="229"/>
        <end position="232"/>
    </location>
</feature>
<feature type="compositionally biased region" description="Polar residues" evidence="2">
    <location>
        <begin position="242"/>
        <end position="252"/>
    </location>
</feature>
<feature type="splice variant" id="VSP_044588" description="In isoform 3." evidence="8">
    <location>
        <begin position="1"/>
        <end position="50"/>
    </location>
</feature>
<feature type="splice variant" id="VSP_006438" description="In isoform 2." evidence="7">
    <original>MHRLMGVNSTAAAAAGQPNVSCTCNCKRSLFQSMEIT</original>
    <variation>MA</variation>
    <location>
        <begin position="1"/>
        <end position="37"/>
    </location>
</feature>
<feature type="sequence variant" id="VAR_062154" description="In dbSNP:rs41314918.">
    <original>E</original>
    <variation>D</variation>
    <location>
        <position position="128"/>
    </location>
</feature>
<feature type="mutagenesis site" description="Impairs interaction with NEDD4. Impairs polyubiquitination of AR; when associated with A-232." evidence="3 4">
    <original>Y</original>
    <variation>A</variation>
    <location>
        <position position="161"/>
    </location>
</feature>
<feature type="mutagenesis site" description="Impairs interaction with NEDD4. Impairs polyubiquitination of AR; when associated with A-232." evidence="3 4">
    <original>Y</original>
    <variation>A</variation>
    <location>
        <position position="232"/>
    </location>
</feature>
<protein>
    <recommendedName>
        <fullName>Protein TMEPAI</fullName>
    </recommendedName>
    <alternativeName>
        <fullName>Prostate transmembrane protein androgen induced 1</fullName>
    </alternativeName>
    <alternativeName>
        <fullName>Solid tumor-associated 1 protein</fullName>
    </alternativeName>
    <alternativeName>
        <fullName>Transmembrane prostate androgen-induced protein</fullName>
    </alternativeName>
</protein>
<reference key="1">
    <citation type="journal article" date="2000" name="Genomics">
        <title>A novel androgen-regulated gene, PMEPA1, located on chromosome 20q13 exhibits high level expression in prostate.</title>
        <authorList>
            <person name="Xu L.L."/>
            <person name="Shanmugam N."/>
            <person name="Segawa T."/>
            <person name="Sesterhenn I.A."/>
            <person name="McLeod D.G."/>
            <person name="Moul J.W."/>
            <person name="Srivastava S."/>
        </authorList>
    </citation>
    <scope>NUCLEOTIDE SEQUENCE [MRNA] (ISOFORM 2)</scope>
</reference>
<reference key="2">
    <citation type="journal article" date="2001" name="Mol. Carcinog.">
        <title>Characterization of a novel gene, STAG1/PMEPA1, upregulated in renal cell carcinoma and other solid tumors.</title>
        <authorList>
            <person name="Rae F.K."/>
            <person name="Hooper J.D."/>
            <person name="Nicol D.L."/>
            <person name="Clements J.A."/>
        </authorList>
    </citation>
    <scope>NUCLEOTIDE SEQUENCE [MRNA] (ISOFORM 1)</scope>
</reference>
<reference key="3">
    <citation type="journal article" date="2003" name="Cancer Res.">
        <title>PMEPA1, a transforming growth factor-beta-induced marker of terminal colonocyte differentiation whose expression is maintained in primary and metastatic colon cancer.</title>
        <authorList>
            <person name="Brunschwig E.B."/>
            <person name="Wilson K."/>
            <person name="Mack D."/>
            <person name="Dawson D."/>
            <person name="Lawrence E."/>
            <person name="Willson J.K.V."/>
            <person name="Lu S."/>
            <person name="Nosrati A."/>
            <person name="Rerko R.M."/>
            <person name="Swinler S."/>
            <person name="Beard L."/>
            <person name="Lutterbaugh J.D."/>
            <person name="Willis J."/>
            <person name="Platzer P."/>
            <person name="Markowitz S."/>
        </authorList>
    </citation>
    <scope>NUCLEOTIDE SEQUENCE [MRNA] (ISOFORM 3)</scope>
</reference>
<reference key="4">
    <citation type="journal article" date="2001" name="Nature">
        <title>The DNA sequence and comparative analysis of human chromosome 20.</title>
        <authorList>
            <person name="Deloukas P."/>
            <person name="Matthews L.H."/>
            <person name="Ashurst J.L."/>
            <person name="Burton J."/>
            <person name="Gilbert J.G.R."/>
            <person name="Jones M."/>
            <person name="Stavrides G."/>
            <person name="Almeida J.P."/>
            <person name="Babbage A.K."/>
            <person name="Bagguley C.L."/>
            <person name="Bailey J."/>
            <person name="Barlow K.F."/>
            <person name="Bates K.N."/>
            <person name="Beard L.M."/>
            <person name="Beare D.M."/>
            <person name="Beasley O.P."/>
            <person name="Bird C.P."/>
            <person name="Blakey S.E."/>
            <person name="Bridgeman A.M."/>
            <person name="Brown A.J."/>
            <person name="Buck D."/>
            <person name="Burrill W.D."/>
            <person name="Butler A.P."/>
            <person name="Carder C."/>
            <person name="Carter N.P."/>
            <person name="Chapman J.C."/>
            <person name="Clamp M."/>
            <person name="Clark G."/>
            <person name="Clark L.N."/>
            <person name="Clark S.Y."/>
            <person name="Clee C.M."/>
            <person name="Clegg S."/>
            <person name="Cobley V.E."/>
            <person name="Collier R.E."/>
            <person name="Connor R.E."/>
            <person name="Corby N.R."/>
            <person name="Coulson A."/>
            <person name="Coville G.J."/>
            <person name="Deadman R."/>
            <person name="Dhami P.D."/>
            <person name="Dunn M."/>
            <person name="Ellington A.G."/>
            <person name="Frankland J.A."/>
            <person name="Fraser A."/>
            <person name="French L."/>
            <person name="Garner P."/>
            <person name="Grafham D.V."/>
            <person name="Griffiths C."/>
            <person name="Griffiths M.N.D."/>
            <person name="Gwilliam R."/>
            <person name="Hall R.E."/>
            <person name="Hammond S."/>
            <person name="Harley J.L."/>
            <person name="Heath P.D."/>
            <person name="Ho S."/>
            <person name="Holden J.L."/>
            <person name="Howden P.J."/>
            <person name="Huckle E."/>
            <person name="Hunt A.R."/>
            <person name="Hunt S.E."/>
            <person name="Jekosch K."/>
            <person name="Johnson C.M."/>
            <person name="Johnson D."/>
            <person name="Kay M.P."/>
            <person name="Kimberley A.M."/>
            <person name="King A."/>
            <person name="Knights A."/>
            <person name="Laird G.K."/>
            <person name="Lawlor S."/>
            <person name="Lehvaeslaiho M.H."/>
            <person name="Leversha M.A."/>
            <person name="Lloyd C."/>
            <person name="Lloyd D.M."/>
            <person name="Lovell J.D."/>
            <person name="Marsh V.L."/>
            <person name="Martin S.L."/>
            <person name="McConnachie L.J."/>
            <person name="McLay K."/>
            <person name="McMurray A.A."/>
            <person name="Milne S.A."/>
            <person name="Mistry D."/>
            <person name="Moore M.J.F."/>
            <person name="Mullikin J.C."/>
            <person name="Nickerson T."/>
            <person name="Oliver K."/>
            <person name="Parker A."/>
            <person name="Patel R."/>
            <person name="Pearce T.A.V."/>
            <person name="Peck A.I."/>
            <person name="Phillimore B.J.C.T."/>
            <person name="Prathalingam S.R."/>
            <person name="Plumb R.W."/>
            <person name="Ramsay H."/>
            <person name="Rice C.M."/>
            <person name="Ross M.T."/>
            <person name="Scott C.E."/>
            <person name="Sehra H.K."/>
            <person name="Shownkeen R."/>
            <person name="Sims S."/>
            <person name="Skuce C.D."/>
            <person name="Smith M.L."/>
            <person name="Soderlund C."/>
            <person name="Steward C.A."/>
            <person name="Sulston J.E."/>
            <person name="Swann R.M."/>
            <person name="Sycamore N."/>
            <person name="Taylor R."/>
            <person name="Tee L."/>
            <person name="Thomas D.W."/>
            <person name="Thorpe A."/>
            <person name="Tracey A."/>
            <person name="Tromans A.C."/>
            <person name="Vaudin M."/>
            <person name="Wall M."/>
            <person name="Wallis J.M."/>
            <person name="Whitehead S.L."/>
            <person name="Whittaker P."/>
            <person name="Willey D.L."/>
            <person name="Williams L."/>
            <person name="Williams S.A."/>
            <person name="Wilming L."/>
            <person name="Wray P.W."/>
            <person name="Hubbard T."/>
            <person name="Durbin R.M."/>
            <person name="Bentley D.R."/>
            <person name="Beck S."/>
            <person name="Rogers J."/>
        </authorList>
    </citation>
    <scope>NUCLEOTIDE SEQUENCE [LARGE SCALE GENOMIC DNA]</scope>
</reference>
<reference key="5">
    <citation type="submission" date="2005-09" db="EMBL/GenBank/DDBJ databases">
        <authorList>
            <person name="Mural R.J."/>
            <person name="Istrail S."/>
            <person name="Sutton G.G."/>
            <person name="Florea L."/>
            <person name="Halpern A.L."/>
            <person name="Mobarry C.M."/>
            <person name="Lippert R."/>
            <person name="Walenz B."/>
            <person name="Shatkay H."/>
            <person name="Dew I."/>
            <person name="Miller J.R."/>
            <person name="Flanigan M.J."/>
            <person name="Edwards N.J."/>
            <person name="Bolanos R."/>
            <person name="Fasulo D."/>
            <person name="Halldorsson B.V."/>
            <person name="Hannenhalli S."/>
            <person name="Turner R."/>
            <person name="Yooseph S."/>
            <person name="Lu F."/>
            <person name="Nusskern D.R."/>
            <person name="Shue B.C."/>
            <person name="Zheng X.H."/>
            <person name="Zhong F."/>
            <person name="Delcher A.L."/>
            <person name="Huson D.H."/>
            <person name="Kravitz S.A."/>
            <person name="Mouchard L."/>
            <person name="Reinert K."/>
            <person name="Remington K.A."/>
            <person name="Clark A.G."/>
            <person name="Waterman M.S."/>
            <person name="Eichler E.E."/>
            <person name="Adams M.D."/>
            <person name="Hunkapiller M.W."/>
            <person name="Myers E.W."/>
            <person name="Venter J.C."/>
        </authorList>
    </citation>
    <scope>NUCLEOTIDE SEQUENCE [LARGE SCALE GENOMIC DNA]</scope>
</reference>
<reference key="6">
    <citation type="journal article" date="2004" name="Genome Res.">
        <title>The status, quality, and expansion of the NIH full-length cDNA project: the Mammalian Gene Collection (MGC).</title>
        <authorList>
            <consortium name="The MGC Project Team"/>
        </authorList>
    </citation>
    <scope>NUCLEOTIDE SEQUENCE [LARGE SCALE MRNA] OF 8-287 (ISOFORM 1)</scope>
    <source>
        <tissue>Kidney</tissue>
    </source>
</reference>
<reference key="7">
    <citation type="journal article" date="2003" name="Cancer Res.">
        <title>PMEPA1, an androgen-regulated NEDD4-binding protein, exhibits cell growth inhibitory function and decreased expression during prostate cancer progression.</title>
        <authorList>
            <person name="Xu L.L."/>
            <person name="Shi Y."/>
            <person name="Petrovics G."/>
            <person name="Sun C."/>
            <person name="Makarem M."/>
            <person name="Zhang W."/>
            <person name="Sesterhenn I.A."/>
            <person name="McLeod D.G."/>
            <person name="Sun L."/>
            <person name="Moul J.W."/>
            <person name="Srivastava S."/>
        </authorList>
    </citation>
    <scope>INTERACTION WITH NEDD4</scope>
    <scope>MUTAGENESIS OF TYR-161 AND TYR-232</scope>
</reference>
<reference key="8">
    <citation type="journal article" date="2008" name="J. Biol. Chem.">
        <title>A feedback loop between the androgen receptor and a NEDD4-binding protein, PMEPA1, in prostate cancer cells.</title>
        <authorList>
            <person name="Li H."/>
            <person name="Xu L.L."/>
            <person name="Masuda K."/>
            <person name="Raymundo E."/>
            <person name="McLeod D.G."/>
            <person name="Dobi A."/>
            <person name="Srivastava S."/>
        </authorList>
    </citation>
    <scope>FUNCTION</scope>
    <scope>INTERACTION WITH AR</scope>
    <scope>MOTIFS</scope>
    <scope>MUTAGENESIS OF TYR-161 AND TYR-232</scope>
    <scope>INDUCTION BY ANDROGEN</scope>
</reference>
<reference key="9">
    <citation type="journal article" date="2010" name="Mol. Cell">
        <title>TMEPAI, a transmembrane TGF-beta-inducible protein, sequesters Smad proteins from active participation in TGF-beta signaling.</title>
        <authorList>
            <person name="Watanabe Y."/>
            <person name="Itoh S."/>
            <person name="Goto T."/>
            <person name="Ohnishi E."/>
            <person name="Inamitsu M."/>
            <person name="Itoh F."/>
            <person name="Satoh K."/>
            <person name="Wiercinska E."/>
            <person name="Yang W."/>
            <person name="Shi L."/>
            <person name="Tanaka A."/>
            <person name="Nakano N."/>
            <person name="Mommaas A.M."/>
            <person name="Shibuya H."/>
            <person name="Ten Dijke P."/>
            <person name="Kato M."/>
        </authorList>
    </citation>
    <scope>FUNCTION</scope>
    <scope>INTERACTION WITH SMAD2 AND SMAD3</scope>
    <scope>SUBCELLULAR LOCATION</scope>
    <scope>MOTIF</scope>
    <scope>INDUCTION BY TGF-BETA</scope>
</reference>
<reference key="10">
    <citation type="journal article" date="2014" name="J. Biol. Chem.">
        <title>C18 ORF1, a novel negative regulator of transforming growth factor-beta signaling.</title>
        <authorList>
            <person name="Nakano N."/>
            <person name="Maeyama K."/>
            <person name="Sakata N."/>
            <person name="Itoh F."/>
            <person name="Akatsu R."/>
            <person name="Nakata M."/>
            <person name="Katsu Y."/>
            <person name="Ikeno S."/>
            <person name="Togawa Y."/>
            <person name="Vo Nguyen T.T."/>
            <person name="Watanabe Y."/>
            <person name="Kato M."/>
            <person name="Itoh S."/>
        </authorList>
    </citation>
    <scope>FUNCTION</scope>
    <scope>INTERACTION WITH LDLRAD4</scope>
    <scope>SUBCELLULAR LOCATION</scope>
</reference>
<accession>Q969W9</accession>
<accession>Q5TDR6</accession>
<accession>Q8NER4</accession>
<accession>Q96B72</accession>
<accession>Q9UJD3</accession>
<gene>
    <name type="primary">PMEPA1</name>
    <name type="synonym">STAG1</name>
    <name type="synonym">TMEPAI</name>
</gene>
<comment type="function">
    <text evidence="4 5 6">Functions as a negative regulator of TGF-beta signaling and thereby probably plays a role in cell proliferation, differentiation, apoptosis, motility, extracellular matrix production and immunosuppression. In the canonical TGF-beta pathway, ZFYVE9/SARA recruits the intracellular signal transducer and transcriptional modulators SMAD2 and SMAD3 to the TGF-beta receptor. Phosphorylated by the receptor, SMAD2 and SMAD3 then form a heteromeric complex with SMAD4 that translocates to the nucleus to regulate transcription. Through interaction with SMAD2 and SMAD3, LDLRAD4 may compete with ZFYVE9 and SMAD4 and prevent propagation of the intracellular signal (PubMed:20129061, PubMed:24627487). Also involved in down-regulation of the androgen receptor (AR), enhancing ubiquitination and proteasome-mediated degradation of AR, probably by recruiting NEDD4 (PubMed:18703514).</text>
</comment>
<comment type="subunit">
    <text evidence="3 4 5 6">Interacts with NEDD4 (via PPxY motifs). Interacts with AR. Interacts with LDLRAD4. Interacts (via the SMAD interaction motif) with SMAD2 and SMAD3.</text>
</comment>
<comment type="interaction">
    <interactant intactId="EBI-13318883">
        <id>Q969W9-2</id>
    </interactant>
    <interactant intactId="EBI-12135243">
        <id>O95208-2</id>
        <label>EPN2</label>
    </interactant>
    <organismsDiffer>false</organismsDiffer>
    <experiments>3</experiments>
</comment>
<comment type="interaction">
    <interactant intactId="EBI-13318883">
        <id>Q969W9-2</id>
    </interactant>
    <interactant intactId="EBI-746259">
        <id>Q96DC9</id>
        <label>OTUB2</label>
    </interactant>
    <organismsDiffer>false</organismsDiffer>
    <experiments>3</experiments>
</comment>
<comment type="interaction">
    <interactant intactId="EBI-13318883">
        <id>Q969W9-2</id>
    </interactant>
    <interactant intactId="EBI-347996">
        <id>O43765</id>
        <label>SGTA</label>
    </interactant>
    <organismsDiffer>false</organismsDiffer>
    <experiments>3</experiments>
</comment>
<comment type="interaction">
    <interactant intactId="EBI-13318883">
        <id>Q969W9-2</id>
    </interactant>
    <interactant intactId="EBI-7353612">
        <id>P57075-2</id>
        <label>UBASH3A</label>
    </interactant>
    <organismsDiffer>false</organismsDiffer>
    <experiments>3</experiments>
</comment>
<comment type="interaction">
    <interactant intactId="EBI-13318883">
        <id>Q969W9-2</id>
    </interactant>
    <interactant intactId="EBI-947187">
        <id>Q9UHD9</id>
        <label>UBQLN2</label>
    </interactant>
    <organismsDiffer>false</organismsDiffer>
    <experiments>3</experiments>
</comment>
<comment type="subcellular location">
    <subcellularLocation>
        <location>Early endosome membrane</location>
        <topology>Single-pass membrane protein</topology>
    </subcellularLocation>
    <subcellularLocation>
        <location>Golgi apparatus membrane</location>
        <topology>Single-pass membrane protein</topology>
    </subcellularLocation>
</comment>
<comment type="alternative products">
    <event type="alternative splicing"/>
    <isoform>
        <id>Q969W9-1</id>
        <name>1</name>
        <name>a</name>
        <sequence type="displayed"/>
    </isoform>
    <isoform>
        <id>Q969W9-2</id>
        <name>2</name>
        <name>b</name>
        <sequence type="described" ref="VSP_006438"/>
    </isoform>
    <isoform>
        <id>Q969W9-3</id>
        <name>3</name>
        <name>c</name>
        <sequence type="described" ref="VSP_044588"/>
    </isoform>
</comment>
<comment type="tissue specificity">
    <text>Highest expression in prostate. Also expressed in ovary.</text>
</comment>
<comment type="induction">
    <text evidence="4 5">Up-regulated by androgen and TGF-beta (at protein level).</text>
</comment>
<comment type="domain">
    <text evidence="4">The PPxY motifs mediate interaction with NEDD4.</text>
</comment>
<comment type="domain">
    <text evidence="5">The SMAD interaction motif is required for interaction with SMAD2 and SMAD3 and the negative regulation of TGF-beta signaling.</text>
</comment>
<comment type="similarity">
    <text evidence="9">Belongs to the PMEPA1 family.</text>
</comment>
<proteinExistence type="evidence at protein level"/>
<name>PMEPA_HUMAN</name>
<keyword id="KW-0025">Alternative splicing</keyword>
<keyword id="KW-0967">Endosome</keyword>
<keyword id="KW-0333">Golgi apparatus</keyword>
<keyword id="KW-0472">Membrane</keyword>
<keyword id="KW-1267">Proteomics identification</keyword>
<keyword id="KW-1185">Reference proteome</keyword>
<keyword id="KW-0677">Repeat</keyword>
<keyword id="KW-0734">Signal transduction inhibitor</keyword>
<keyword id="KW-0812">Transmembrane</keyword>
<keyword id="KW-1133">Transmembrane helix</keyword>
<keyword id="KW-0833">Ubl conjugation pathway</keyword>